<feature type="chain" id="PRO_0000262089" description="Phosphatidylserine decarboxylase beta chain" evidence="1">
    <location>
        <begin position="1"/>
        <end position="252"/>
    </location>
</feature>
<feature type="chain" id="PRO_0000262090" description="Phosphatidylserine decarboxylase alpha chain" evidence="1">
    <location>
        <begin position="253"/>
        <end position="291"/>
    </location>
</feature>
<feature type="active site" description="Charge relay system; for autoendoproteolytic cleavage activity" evidence="1">
    <location>
        <position position="93"/>
    </location>
</feature>
<feature type="active site" description="Charge relay system; for autoendoproteolytic cleavage activity" evidence="1">
    <location>
        <position position="150"/>
    </location>
</feature>
<feature type="active site" description="Charge relay system; for autoendoproteolytic cleavage activity" evidence="1">
    <location>
        <position position="253"/>
    </location>
</feature>
<feature type="active site" description="Schiff-base intermediate with substrate; via pyruvic acid; for decarboxylase activity" evidence="1">
    <location>
        <position position="253"/>
    </location>
</feature>
<feature type="site" description="Cleavage (non-hydrolytic); by autocatalysis" evidence="1">
    <location>
        <begin position="252"/>
        <end position="253"/>
    </location>
</feature>
<feature type="modified residue" description="Pyruvic acid (Ser); by autocatalysis" evidence="1">
    <location>
        <position position="253"/>
    </location>
</feature>
<protein>
    <recommendedName>
        <fullName evidence="1">Phosphatidylserine decarboxylase proenzyme</fullName>
        <ecNumber evidence="1">4.1.1.65</ecNumber>
    </recommendedName>
    <component>
        <recommendedName>
            <fullName evidence="1">Phosphatidylserine decarboxylase alpha chain</fullName>
        </recommendedName>
    </component>
    <component>
        <recommendedName>
            <fullName evidence="1">Phosphatidylserine decarboxylase beta chain</fullName>
        </recommendedName>
    </component>
</protein>
<accession>Q0VMD7</accession>
<gene>
    <name evidence="1" type="primary">psd</name>
    <name type="ordered locus">ABO_2213</name>
</gene>
<keyword id="KW-1003">Cell membrane</keyword>
<keyword id="KW-0210">Decarboxylase</keyword>
<keyword id="KW-0444">Lipid biosynthesis</keyword>
<keyword id="KW-0443">Lipid metabolism</keyword>
<keyword id="KW-0456">Lyase</keyword>
<keyword id="KW-0472">Membrane</keyword>
<keyword id="KW-0594">Phospholipid biosynthesis</keyword>
<keyword id="KW-1208">Phospholipid metabolism</keyword>
<keyword id="KW-0670">Pyruvate</keyword>
<keyword id="KW-1185">Reference proteome</keyword>
<keyword id="KW-0865">Zymogen</keyword>
<comment type="function">
    <text evidence="1">Catalyzes the formation of phosphatidylethanolamine (PtdEtn) from phosphatidylserine (PtdSer).</text>
</comment>
<comment type="catalytic activity">
    <reaction evidence="1">
        <text>a 1,2-diacyl-sn-glycero-3-phospho-L-serine + H(+) = a 1,2-diacyl-sn-glycero-3-phosphoethanolamine + CO2</text>
        <dbReference type="Rhea" id="RHEA:20828"/>
        <dbReference type="ChEBI" id="CHEBI:15378"/>
        <dbReference type="ChEBI" id="CHEBI:16526"/>
        <dbReference type="ChEBI" id="CHEBI:57262"/>
        <dbReference type="ChEBI" id="CHEBI:64612"/>
        <dbReference type="EC" id="4.1.1.65"/>
    </reaction>
</comment>
<comment type="cofactor">
    <cofactor evidence="1">
        <name>pyruvate</name>
        <dbReference type="ChEBI" id="CHEBI:15361"/>
    </cofactor>
    <text evidence="1">Binds 1 pyruvoyl group covalently per subunit.</text>
</comment>
<comment type="pathway">
    <text evidence="1">Phospholipid metabolism; phosphatidylethanolamine biosynthesis; phosphatidylethanolamine from CDP-diacylglycerol: step 2/2.</text>
</comment>
<comment type="subunit">
    <text evidence="1">Heterodimer of a large membrane-associated beta subunit and a small pyruvoyl-containing alpha subunit.</text>
</comment>
<comment type="subcellular location">
    <subcellularLocation>
        <location evidence="1">Cell membrane</location>
        <topology evidence="1">Peripheral membrane protein</topology>
    </subcellularLocation>
</comment>
<comment type="PTM">
    <text evidence="1">Is synthesized initially as an inactive proenzyme. Formation of the active enzyme involves a self-maturation process in which the active site pyruvoyl group is generated from an internal serine residue via an autocatalytic post-translational modification. Two non-identical subunits are generated from the proenzyme in this reaction, and the pyruvate is formed at the N-terminus of the alpha chain, which is derived from the carboxyl end of the proenzyme. The autoendoproteolytic cleavage occurs by a canonical serine protease mechanism, in which the side chain hydroxyl group of the serine supplies its oxygen atom to form the C-terminus of the beta chain, while the remainder of the serine residue undergoes an oxidative deamination to produce ammonia and the pyruvoyl prosthetic group on the alpha chain. During this reaction, the Ser that is part of the protease active site of the proenzyme becomes the pyruvoyl prosthetic group, which constitutes an essential element of the active site of the mature decarboxylase.</text>
</comment>
<comment type="similarity">
    <text evidence="1">Belongs to the phosphatidylserine decarboxylase family. PSD-B subfamily. Prokaryotic type I sub-subfamily.</text>
</comment>
<proteinExistence type="inferred from homology"/>
<name>PSD_ALCBS</name>
<dbReference type="EC" id="4.1.1.65" evidence="1"/>
<dbReference type="EMBL" id="AM286690">
    <property type="protein sequence ID" value="CAL17661.1"/>
    <property type="molecule type" value="Genomic_DNA"/>
</dbReference>
<dbReference type="SMR" id="Q0VMD7"/>
<dbReference type="STRING" id="393595.ABO_2213"/>
<dbReference type="KEGG" id="abo:ABO_2213"/>
<dbReference type="eggNOG" id="COG0688">
    <property type="taxonomic scope" value="Bacteria"/>
</dbReference>
<dbReference type="HOGENOM" id="CLU_029061_4_1_6"/>
<dbReference type="OrthoDB" id="9802030at2"/>
<dbReference type="UniPathway" id="UPA00558">
    <property type="reaction ID" value="UER00616"/>
</dbReference>
<dbReference type="Proteomes" id="UP000008871">
    <property type="component" value="Chromosome"/>
</dbReference>
<dbReference type="GO" id="GO:0005886">
    <property type="term" value="C:plasma membrane"/>
    <property type="evidence" value="ECO:0007669"/>
    <property type="project" value="UniProtKB-SubCell"/>
</dbReference>
<dbReference type="GO" id="GO:0004609">
    <property type="term" value="F:phosphatidylserine decarboxylase activity"/>
    <property type="evidence" value="ECO:0007669"/>
    <property type="project" value="UniProtKB-UniRule"/>
</dbReference>
<dbReference type="GO" id="GO:0006646">
    <property type="term" value="P:phosphatidylethanolamine biosynthetic process"/>
    <property type="evidence" value="ECO:0007669"/>
    <property type="project" value="UniProtKB-UniRule"/>
</dbReference>
<dbReference type="HAMAP" id="MF_00662">
    <property type="entry name" value="PS_decarb_PSD_B_type1"/>
    <property type="match status" value="1"/>
</dbReference>
<dbReference type="InterPro" id="IPR003817">
    <property type="entry name" value="PS_Dcarbxylase"/>
</dbReference>
<dbReference type="InterPro" id="IPR033177">
    <property type="entry name" value="PSD-B"/>
</dbReference>
<dbReference type="InterPro" id="IPR033178">
    <property type="entry name" value="PSD_type1_pro"/>
</dbReference>
<dbReference type="NCBIfam" id="TIGR00163">
    <property type="entry name" value="PS_decarb"/>
    <property type="match status" value="1"/>
</dbReference>
<dbReference type="PANTHER" id="PTHR10067">
    <property type="entry name" value="PHOSPHATIDYLSERINE DECARBOXYLASE"/>
    <property type="match status" value="1"/>
</dbReference>
<dbReference type="PANTHER" id="PTHR10067:SF6">
    <property type="entry name" value="PHOSPHATIDYLSERINE DECARBOXYLASE PROENZYME, MITOCHONDRIAL"/>
    <property type="match status" value="1"/>
</dbReference>
<dbReference type="Pfam" id="PF02666">
    <property type="entry name" value="PS_Dcarbxylase"/>
    <property type="match status" value="1"/>
</dbReference>
<organism>
    <name type="scientific">Alcanivorax borkumensis (strain ATCC 700651 / DSM 11573 / NCIMB 13689 / SK2)</name>
    <dbReference type="NCBI Taxonomy" id="393595"/>
    <lineage>
        <taxon>Bacteria</taxon>
        <taxon>Pseudomonadati</taxon>
        <taxon>Pseudomonadota</taxon>
        <taxon>Gammaproteobacteria</taxon>
        <taxon>Oceanospirillales</taxon>
        <taxon>Alcanivoracaceae</taxon>
        <taxon>Alcanivorax</taxon>
    </lineage>
</organism>
<reference key="1">
    <citation type="journal article" date="2006" name="Nat. Biotechnol.">
        <title>Genome sequence of the ubiquitous hydrocarbon-degrading marine bacterium Alcanivorax borkumensis.</title>
        <authorList>
            <person name="Schneiker S."/>
            <person name="Martins dos Santos V.A.P."/>
            <person name="Bartels D."/>
            <person name="Bekel T."/>
            <person name="Brecht M."/>
            <person name="Buhrmester J."/>
            <person name="Chernikova T.N."/>
            <person name="Denaro R."/>
            <person name="Ferrer M."/>
            <person name="Gertler C."/>
            <person name="Goesmann A."/>
            <person name="Golyshina O.V."/>
            <person name="Kaminski F."/>
            <person name="Khachane A.N."/>
            <person name="Lang S."/>
            <person name="Linke B."/>
            <person name="McHardy A.C."/>
            <person name="Meyer F."/>
            <person name="Nechitaylo T."/>
            <person name="Puehler A."/>
            <person name="Regenhardt D."/>
            <person name="Rupp O."/>
            <person name="Sabirova J.S."/>
            <person name="Selbitschka W."/>
            <person name="Yakimov M.M."/>
            <person name="Timmis K.N."/>
            <person name="Vorhoelter F.-J."/>
            <person name="Weidner S."/>
            <person name="Kaiser O."/>
            <person name="Golyshin P.N."/>
        </authorList>
    </citation>
    <scope>NUCLEOTIDE SEQUENCE [LARGE SCALE GENOMIC DNA]</scope>
    <source>
        <strain>ATCC 700651 / DSM 11573 / NCIMB 13689 / SK2</strain>
    </source>
</reference>
<sequence length="291" mass="32065">MSLRDKLFVTLQYLIPQHALSRLVGILARSEVPWIKTTFINMFMKRFGIDLSEAQIEDADQFPTFNAFFTRALKADARPLEASESNDIASPADGAVSQLGAIRANQVFQAKGHDYSLYDLLGGDSALASEFTNGQFATVYLSPRDYHRVHMPFTGTLRETRYVPGDLFSVNEATANGVPNLFARNERLVCIFDTEQGPMAVILVGAMIVAGIETVFSGQVTPLPKQVVTTDYLRSKPIALEKGEELGRFLLGSTVVMLFPEGKAKFAPNLKPGSQVRVRGKLGAYTNENKH</sequence>
<evidence type="ECO:0000255" key="1">
    <source>
        <dbReference type="HAMAP-Rule" id="MF_00662"/>
    </source>
</evidence>